<evidence type="ECO:0000255" key="1">
    <source>
        <dbReference type="HAMAP-Rule" id="MF_01576"/>
    </source>
</evidence>
<protein>
    <recommendedName>
        <fullName evidence="1">Bifunctional protein FolD 1</fullName>
    </recommendedName>
    <domain>
        <recommendedName>
            <fullName evidence="1">Methylenetetrahydrofolate dehydrogenase</fullName>
            <ecNumber evidence="1">1.5.1.5</ecNumber>
        </recommendedName>
    </domain>
    <domain>
        <recommendedName>
            <fullName evidence="1">Methenyltetrahydrofolate cyclohydrolase</fullName>
            <ecNumber evidence="1">3.5.4.9</ecNumber>
        </recommendedName>
    </domain>
</protein>
<reference key="1">
    <citation type="journal article" date="2007" name="Genome Res.">
        <title>Genome characteristics of facultatively symbiotic Frankia sp. strains reflect host range and host plant biogeography.</title>
        <authorList>
            <person name="Normand P."/>
            <person name="Lapierre P."/>
            <person name="Tisa L.S."/>
            <person name="Gogarten J.P."/>
            <person name="Alloisio N."/>
            <person name="Bagnarol E."/>
            <person name="Bassi C.A."/>
            <person name="Berry A.M."/>
            <person name="Bickhart D.M."/>
            <person name="Choisne N."/>
            <person name="Couloux A."/>
            <person name="Cournoyer B."/>
            <person name="Cruveiller S."/>
            <person name="Daubin V."/>
            <person name="Demange N."/>
            <person name="Francino M.P."/>
            <person name="Goltsman E."/>
            <person name="Huang Y."/>
            <person name="Kopp O.R."/>
            <person name="Labarre L."/>
            <person name="Lapidus A."/>
            <person name="Lavire C."/>
            <person name="Marechal J."/>
            <person name="Martinez M."/>
            <person name="Mastronunzio J.E."/>
            <person name="Mullin B.C."/>
            <person name="Niemann J."/>
            <person name="Pujic P."/>
            <person name="Rawnsley T."/>
            <person name="Rouy Z."/>
            <person name="Schenowitz C."/>
            <person name="Sellstedt A."/>
            <person name="Tavares F."/>
            <person name="Tomkins J.P."/>
            <person name="Vallenet D."/>
            <person name="Valverde C."/>
            <person name="Wall L.G."/>
            <person name="Wang Y."/>
            <person name="Medigue C."/>
            <person name="Benson D.R."/>
        </authorList>
    </citation>
    <scope>NUCLEOTIDE SEQUENCE [LARGE SCALE GENOMIC DNA]</scope>
    <source>
        <strain>DSM 45818 / CECT 9043 / HFP020203 / CcI3</strain>
    </source>
</reference>
<accession>Q2JCX4</accession>
<comment type="function">
    <text evidence="1">Catalyzes the oxidation of 5,10-methylenetetrahydrofolate to 5,10-methenyltetrahydrofolate and then the hydrolysis of 5,10-methenyltetrahydrofolate to 10-formyltetrahydrofolate.</text>
</comment>
<comment type="catalytic activity">
    <reaction evidence="1">
        <text>(6R)-5,10-methylene-5,6,7,8-tetrahydrofolate + NADP(+) = (6R)-5,10-methenyltetrahydrofolate + NADPH</text>
        <dbReference type="Rhea" id="RHEA:22812"/>
        <dbReference type="ChEBI" id="CHEBI:15636"/>
        <dbReference type="ChEBI" id="CHEBI:57455"/>
        <dbReference type="ChEBI" id="CHEBI:57783"/>
        <dbReference type="ChEBI" id="CHEBI:58349"/>
        <dbReference type="EC" id="1.5.1.5"/>
    </reaction>
</comment>
<comment type="catalytic activity">
    <reaction evidence="1">
        <text>(6R)-5,10-methenyltetrahydrofolate + H2O = (6R)-10-formyltetrahydrofolate + H(+)</text>
        <dbReference type="Rhea" id="RHEA:23700"/>
        <dbReference type="ChEBI" id="CHEBI:15377"/>
        <dbReference type="ChEBI" id="CHEBI:15378"/>
        <dbReference type="ChEBI" id="CHEBI:57455"/>
        <dbReference type="ChEBI" id="CHEBI:195366"/>
        <dbReference type="EC" id="3.5.4.9"/>
    </reaction>
</comment>
<comment type="pathway">
    <text evidence="1">One-carbon metabolism; tetrahydrofolate interconversion.</text>
</comment>
<comment type="subunit">
    <text evidence="1">Homodimer.</text>
</comment>
<comment type="similarity">
    <text evidence="1">Belongs to the tetrahydrofolate dehydrogenase/cyclohydrolase family.</text>
</comment>
<feature type="chain" id="PRO_0000268354" description="Bifunctional protein FolD 1">
    <location>
        <begin position="1"/>
        <end position="276"/>
    </location>
</feature>
<feature type="binding site" evidence="1">
    <location>
        <begin position="161"/>
        <end position="163"/>
    </location>
    <ligand>
        <name>NADP(+)</name>
        <dbReference type="ChEBI" id="CHEBI:58349"/>
    </ligand>
</feature>
<feature type="binding site" evidence="1">
    <location>
        <position position="186"/>
    </location>
    <ligand>
        <name>NADP(+)</name>
        <dbReference type="ChEBI" id="CHEBI:58349"/>
    </ligand>
</feature>
<feature type="binding site" evidence="1">
    <location>
        <position position="227"/>
    </location>
    <ligand>
        <name>NADP(+)</name>
        <dbReference type="ChEBI" id="CHEBI:58349"/>
    </ligand>
</feature>
<organism>
    <name type="scientific">Frankia casuarinae (strain DSM 45818 / CECT 9043 / HFP020203 / CcI3)</name>
    <dbReference type="NCBI Taxonomy" id="106370"/>
    <lineage>
        <taxon>Bacteria</taxon>
        <taxon>Bacillati</taxon>
        <taxon>Actinomycetota</taxon>
        <taxon>Actinomycetes</taxon>
        <taxon>Frankiales</taxon>
        <taxon>Frankiaceae</taxon>
        <taxon>Frankia</taxon>
    </lineage>
</organism>
<name>FOLD1_FRACC</name>
<sequence length="276" mass="27948">MRMLDGRSMAAEIGRYVVDEAERLAAAGVTPTLAVVLPTADPAAYSYAEIIERTAGKVGVHCVLHEPKGEPAAILDTIDTVAADPTVHGIIVQTPLPGGLTSREVGEHIPTAKDVDGMNPSSLGRLALGLPSFAPATAAAVVEILTRARIPMSGARVCVIGRGPVVGKPVSLLLLAEDATVTICHSRTKGLVSIAHEADIIVSATGHPRLVGAGFVRPGAAVIDVGTVVTETGQVGDVDAAAVSSVAGALTPVPGGVGPVTTMLLLRNTIRAARAA</sequence>
<gene>
    <name evidence="1" type="primary">folD1</name>
    <name type="ordered locus">Francci3_1492</name>
</gene>
<proteinExistence type="inferred from homology"/>
<keyword id="KW-0028">Amino-acid biosynthesis</keyword>
<keyword id="KW-0368">Histidine biosynthesis</keyword>
<keyword id="KW-0378">Hydrolase</keyword>
<keyword id="KW-0486">Methionine biosynthesis</keyword>
<keyword id="KW-0511">Multifunctional enzyme</keyword>
<keyword id="KW-0521">NADP</keyword>
<keyword id="KW-0554">One-carbon metabolism</keyword>
<keyword id="KW-0560">Oxidoreductase</keyword>
<keyword id="KW-0658">Purine biosynthesis</keyword>
<keyword id="KW-1185">Reference proteome</keyword>
<dbReference type="EC" id="1.5.1.5" evidence="1"/>
<dbReference type="EC" id="3.5.4.9" evidence="1"/>
<dbReference type="EMBL" id="CP000249">
    <property type="protein sequence ID" value="ABD10868.1"/>
    <property type="molecule type" value="Genomic_DNA"/>
</dbReference>
<dbReference type="RefSeq" id="WP_011435931.1">
    <property type="nucleotide sequence ID" value="NZ_JENI01000011.1"/>
</dbReference>
<dbReference type="SMR" id="Q2JCX4"/>
<dbReference type="STRING" id="106370.Francci3_1492"/>
<dbReference type="KEGG" id="fra:Francci3_1492"/>
<dbReference type="eggNOG" id="COG0190">
    <property type="taxonomic scope" value="Bacteria"/>
</dbReference>
<dbReference type="HOGENOM" id="CLU_034045_2_1_11"/>
<dbReference type="OrthoDB" id="9803580at2"/>
<dbReference type="PhylomeDB" id="Q2JCX4"/>
<dbReference type="UniPathway" id="UPA00193"/>
<dbReference type="Proteomes" id="UP000001937">
    <property type="component" value="Chromosome"/>
</dbReference>
<dbReference type="GO" id="GO:0005829">
    <property type="term" value="C:cytosol"/>
    <property type="evidence" value="ECO:0007669"/>
    <property type="project" value="TreeGrafter"/>
</dbReference>
<dbReference type="GO" id="GO:0004477">
    <property type="term" value="F:methenyltetrahydrofolate cyclohydrolase activity"/>
    <property type="evidence" value="ECO:0007669"/>
    <property type="project" value="UniProtKB-UniRule"/>
</dbReference>
<dbReference type="GO" id="GO:0004488">
    <property type="term" value="F:methylenetetrahydrofolate dehydrogenase (NADP+) activity"/>
    <property type="evidence" value="ECO:0007669"/>
    <property type="project" value="UniProtKB-UniRule"/>
</dbReference>
<dbReference type="GO" id="GO:0000105">
    <property type="term" value="P:L-histidine biosynthetic process"/>
    <property type="evidence" value="ECO:0007669"/>
    <property type="project" value="UniProtKB-KW"/>
</dbReference>
<dbReference type="GO" id="GO:0009086">
    <property type="term" value="P:methionine biosynthetic process"/>
    <property type="evidence" value="ECO:0007669"/>
    <property type="project" value="UniProtKB-KW"/>
</dbReference>
<dbReference type="GO" id="GO:0006164">
    <property type="term" value="P:purine nucleotide biosynthetic process"/>
    <property type="evidence" value="ECO:0007669"/>
    <property type="project" value="UniProtKB-KW"/>
</dbReference>
<dbReference type="GO" id="GO:0035999">
    <property type="term" value="P:tetrahydrofolate interconversion"/>
    <property type="evidence" value="ECO:0007669"/>
    <property type="project" value="UniProtKB-UniRule"/>
</dbReference>
<dbReference type="CDD" id="cd01080">
    <property type="entry name" value="NAD_bind_m-THF_DH_Cyclohyd"/>
    <property type="match status" value="1"/>
</dbReference>
<dbReference type="Gene3D" id="3.40.50.10860">
    <property type="entry name" value="Leucine Dehydrogenase, chain A, domain 1"/>
    <property type="match status" value="1"/>
</dbReference>
<dbReference type="Gene3D" id="3.40.50.720">
    <property type="entry name" value="NAD(P)-binding Rossmann-like Domain"/>
    <property type="match status" value="1"/>
</dbReference>
<dbReference type="HAMAP" id="MF_01576">
    <property type="entry name" value="THF_DHG_CYH"/>
    <property type="match status" value="1"/>
</dbReference>
<dbReference type="InterPro" id="IPR046346">
    <property type="entry name" value="Aminoacid_DH-like_N_sf"/>
</dbReference>
<dbReference type="InterPro" id="IPR036291">
    <property type="entry name" value="NAD(P)-bd_dom_sf"/>
</dbReference>
<dbReference type="InterPro" id="IPR000672">
    <property type="entry name" value="THF_DH/CycHdrlase"/>
</dbReference>
<dbReference type="InterPro" id="IPR020630">
    <property type="entry name" value="THF_DH/CycHdrlase_cat_dom"/>
</dbReference>
<dbReference type="InterPro" id="IPR020631">
    <property type="entry name" value="THF_DH/CycHdrlase_NAD-bd_dom"/>
</dbReference>
<dbReference type="PANTHER" id="PTHR48099:SF5">
    <property type="entry name" value="C-1-TETRAHYDROFOLATE SYNTHASE, CYTOPLASMIC"/>
    <property type="match status" value="1"/>
</dbReference>
<dbReference type="PANTHER" id="PTHR48099">
    <property type="entry name" value="C-1-TETRAHYDROFOLATE SYNTHASE, CYTOPLASMIC-RELATED"/>
    <property type="match status" value="1"/>
</dbReference>
<dbReference type="Pfam" id="PF00763">
    <property type="entry name" value="THF_DHG_CYH"/>
    <property type="match status" value="1"/>
</dbReference>
<dbReference type="Pfam" id="PF02882">
    <property type="entry name" value="THF_DHG_CYH_C"/>
    <property type="match status" value="1"/>
</dbReference>
<dbReference type="PRINTS" id="PR00085">
    <property type="entry name" value="THFDHDRGNASE"/>
</dbReference>
<dbReference type="SUPFAM" id="SSF53223">
    <property type="entry name" value="Aminoacid dehydrogenase-like, N-terminal domain"/>
    <property type="match status" value="1"/>
</dbReference>
<dbReference type="SUPFAM" id="SSF51735">
    <property type="entry name" value="NAD(P)-binding Rossmann-fold domains"/>
    <property type="match status" value="1"/>
</dbReference>